<comment type="function">
    <text evidence="1">Dolichyl pyrophosphate Glc1Man9GlcNAc2 alpha-1,3-glucosyltransferase that operates in the biosynthetic pathway of dolichol-linked oligosaccharides, the glycan precursors employed in protein asparagine (N)-glycosylation. The assembly of dolichol-linked oligosaccharides begins on the cytosolic side of the endoplasmic reticulum membrane and finishes in its lumen. The sequential addition of sugars to dolichol pyrophosphate produces dolichol-linked oligosaccharides containing fourteen sugars, including two GlcNAcs, nine mannoses and three glucoses. Once assembled, the oligosaccharide is transferred from the lipid to nascent proteins by oligosaccharyltransferases. In the lumen of the endoplasmic reticulum, adds the second glucose residue from dolichyl phosphate glucose (Dol-P-Glc) onto the lipid-linked oligosaccharide intermediate Glc(1)Man(9)GlcNAc(2)-PP-Dol to produce Glc(2)Man(9)GlcNAc(2)-PP-Dol.</text>
</comment>
<comment type="catalytic activity">
    <reaction evidence="1">
        <text>an alpha-D-Glc-(1-&gt;3)-alpha-D-Man-(1-&gt;2)-alpha-D-Man-(1-&gt;2)-alpha-D-Man-(1-&gt;3)-[alpha-D-Man-(1-&gt;2)-alpha-D-Man-(1-&gt;3)-[alpha-D-Man-(1-&gt;2)-alpha-D-Man-(1-&gt;6)]-alpha-D-Man-(1-&gt;6)]-beta-D-Man-(1-&gt;4)-beta-D-GlcNAc-(1-&gt;4)-alpha-D-GlcNAc-diphospho-di-trans,poly-cis-dolichol + a di-trans,poly-cis-dolichyl beta-D-glucosyl phosphate = an alpha-D-Glc-(1-&gt;3)-alpha-D-Glc-(1-&gt;3)-alpha-D-Man-(1-&gt;2)-alpha-D-Man-(1-&gt;2)-alpha-D-Man-(1-&gt;3)-[alpha-D-Man-(1-&gt;2)-alpha-D-Man-(1-&gt;3)-[alpha-D-Man-(1-&gt;2)-alpha-D-Man-(1-&gt;6)]-alpha-D-Man-(1-&gt;6)]-beta-D-Man-(1-&gt;4)-beta-D-GlcNAc-(1-&gt;4)-alpha-D-GlcNAc-diphospho-di-trans,poly-cis-dolichol + a di-trans,poly-cis-dolichyl phosphate + H(+)</text>
        <dbReference type="Rhea" id="RHEA:31307"/>
        <dbReference type="Rhea" id="RHEA-COMP:19498"/>
        <dbReference type="Rhea" id="RHEA-COMP:19502"/>
        <dbReference type="Rhea" id="RHEA-COMP:19521"/>
        <dbReference type="Rhea" id="RHEA-COMP:19522"/>
        <dbReference type="ChEBI" id="CHEBI:15378"/>
        <dbReference type="ChEBI" id="CHEBI:57525"/>
        <dbReference type="ChEBI" id="CHEBI:57683"/>
        <dbReference type="ChEBI" id="CHEBI:132521"/>
        <dbReference type="ChEBI" id="CHEBI:132522"/>
        <dbReference type="EC" id="2.4.1.265"/>
    </reaction>
    <physiologicalReaction direction="left-to-right" evidence="1">
        <dbReference type="Rhea" id="RHEA:31308"/>
    </physiologicalReaction>
</comment>
<comment type="pathway">
    <text evidence="1">Protein modification; protein glycosylation.</text>
</comment>
<comment type="subcellular location">
    <subcellularLocation>
        <location evidence="1">Endoplasmic reticulum membrane</location>
        <topology evidence="2">Multi-pass membrane protein</topology>
    </subcellularLocation>
</comment>
<comment type="similarity">
    <text evidence="3">Belongs to the ALG6/ALG8 glucosyltransferase family.</text>
</comment>
<evidence type="ECO:0000250" key="1">
    <source>
        <dbReference type="UniProtKB" id="P40351"/>
    </source>
</evidence>
<evidence type="ECO:0000255" key="2"/>
<evidence type="ECO:0000305" key="3"/>
<reference key="1">
    <citation type="journal article" date="2004" name="Nature">
        <title>Genome evolution in yeasts.</title>
        <authorList>
            <person name="Dujon B."/>
            <person name="Sherman D."/>
            <person name="Fischer G."/>
            <person name="Durrens P."/>
            <person name="Casaregola S."/>
            <person name="Lafontaine I."/>
            <person name="de Montigny J."/>
            <person name="Marck C."/>
            <person name="Neuveglise C."/>
            <person name="Talla E."/>
            <person name="Goffard N."/>
            <person name="Frangeul L."/>
            <person name="Aigle M."/>
            <person name="Anthouard V."/>
            <person name="Babour A."/>
            <person name="Barbe V."/>
            <person name="Barnay S."/>
            <person name="Blanchin S."/>
            <person name="Beckerich J.-M."/>
            <person name="Beyne E."/>
            <person name="Bleykasten C."/>
            <person name="Boisrame A."/>
            <person name="Boyer J."/>
            <person name="Cattolico L."/>
            <person name="Confanioleri F."/>
            <person name="de Daruvar A."/>
            <person name="Despons L."/>
            <person name="Fabre E."/>
            <person name="Fairhead C."/>
            <person name="Ferry-Dumazet H."/>
            <person name="Groppi A."/>
            <person name="Hantraye F."/>
            <person name="Hennequin C."/>
            <person name="Jauniaux N."/>
            <person name="Joyet P."/>
            <person name="Kachouri R."/>
            <person name="Kerrest A."/>
            <person name="Koszul R."/>
            <person name="Lemaire M."/>
            <person name="Lesur I."/>
            <person name="Ma L."/>
            <person name="Muller H."/>
            <person name="Nicaud J.-M."/>
            <person name="Nikolski M."/>
            <person name="Oztas S."/>
            <person name="Ozier-Kalogeropoulos O."/>
            <person name="Pellenz S."/>
            <person name="Potier S."/>
            <person name="Richard G.-F."/>
            <person name="Straub M.-L."/>
            <person name="Suleau A."/>
            <person name="Swennen D."/>
            <person name="Tekaia F."/>
            <person name="Wesolowski-Louvel M."/>
            <person name="Westhof E."/>
            <person name="Wirth B."/>
            <person name="Zeniou-Meyer M."/>
            <person name="Zivanovic Y."/>
            <person name="Bolotin-Fukuhara M."/>
            <person name="Thierry A."/>
            <person name="Bouchier C."/>
            <person name="Caudron B."/>
            <person name="Scarpelli C."/>
            <person name="Gaillardin C."/>
            <person name="Weissenbach J."/>
            <person name="Wincker P."/>
            <person name="Souciet J.-L."/>
        </authorList>
    </citation>
    <scope>NUCLEOTIDE SEQUENCE [LARGE SCALE GENOMIC DNA]</scope>
    <source>
        <strain>ATCC 2001 / BCRC 20586 / JCM 3761 / NBRC 0622 / NRRL Y-65 / CBS 138</strain>
    </source>
</reference>
<keyword id="KW-0256">Endoplasmic reticulum</keyword>
<keyword id="KW-0328">Glycosyltransferase</keyword>
<keyword id="KW-0472">Membrane</keyword>
<keyword id="KW-1185">Reference proteome</keyword>
<keyword id="KW-0808">Transferase</keyword>
<keyword id="KW-0812">Transmembrane</keyword>
<keyword id="KW-1133">Transmembrane helix</keyword>
<protein>
    <recommendedName>
        <fullName evidence="1">Dolichyl pyrophosphate Glc1Man9GlcNAc2 alpha-1,3-glucosyltransferase</fullName>
        <ecNumber evidence="1">2.4.1.265</ecNumber>
    </recommendedName>
    <alternativeName>
        <fullName>Asparagine-linked glycosylation protein 8</fullName>
    </alternativeName>
    <alternativeName>
        <fullName>Dol-P-Glc:Glc(1)Man(9)GlcNAc(2)-PP-dolichyl alpha-1,3-glucosyltransferase</fullName>
    </alternativeName>
    <alternativeName>
        <fullName>Dolichyl-P-Glc:Glc1Man9GlcNAc2-PP-dolichyl glucosyltransferase</fullName>
    </alternativeName>
</protein>
<sequence>MAEVKEEQPKRFSLWNFWISSLLLKLLLIPDYYSTDFDVHRNWLAITNKLPLRQWYYEHTSQWTLDYPPFFAYFEWFLSQFVPSYVKSDGCLDIVEVGQFGMPTVVFQRLTVIASEILLFVVLQVYINTSKVSERTQSFVVASSIAISPGFLIIDHIHFQYNGFLFAILIASIVAAKNKKYLWCGFFYSVALCFKHIYLYLAPCYFVFLLRAYVLNLKDFKFKSYRDLIFIVKWRHLVKLGSVVIATFAVAFGPFIFDLPQLLTRLFPFSRGLTHAYWAPNFWAIYSTIDKILTMVFLKMPYTYKLASQFISPPLIPASLNEIKAKMAANNNGSKGLVEDVYFVILPQIVPKLTFLLTLLYQVLAVVPVLFDPSFKRFMGSMTLCGLASFLFGWHVHEKAIMLVIIPFSFLVISDRRLLSSFMLLTSAGYVSLFPLLYESQDFLIKTFYTYVWCVIYFFAFRKTTRLSTSVERRVFFLDRLTLVYMFLLIPMVFLIQIRDILGWKYLVLQRFEFLSLMVYSFYCSVGIISAWFGLSWLYNFDEPLWVSNE</sequence>
<gene>
    <name type="primary">ALG8</name>
    <name type="ordered locus">CAGL0L10450g</name>
</gene>
<accession>Q6FKM3</accession>
<name>ALG8_CANGA</name>
<organism>
    <name type="scientific">Candida glabrata (strain ATCC 2001 / BCRC 20586 / JCM 3761 / NBRC 0622 / NRRL Y-65 / CBS 138)</name>
    <name type="common">Yeast</name>
    <name type="synonym">Nakaseomyces glabratus</name>
    <dbReference type="NCBI Taxonomy" id="284593"/>
    <lineage>
        <taxon>Eukaryota</taxon>
        <taxon>Fungi</taxon>
        <taxon>Dikarya</taxon>
        <taxon>Ascomycota</taxon>
        <taxon>Saccharomycotina</taxon>
        <taxon>Saccharomycetes</taxon>
        <taxon>Saccharomycetales</taxon>
        <taxon>Saccharomycetaceae</taxon>
        <taxon>Nakaseomyces</taxon>
    </lineage>
</organism>
<dbReference type="EC" id="2.4.1.265" evidence="1"/>
<dbReference type="EMBL" id="CR380958">
    <property type="protein sequence ID" value="CAG62195.1"/>
    <property type="molecule type" value="Genomic_DNA"/>
</dbReference>
<dbReference type="RefSeq" id="XP_449221.1">
    <property type="nucleotide sequence ID" value="XM_449221.1"/>
</dbReference>
<dbReference type="SMR" id="Q6FKM3"/>
<dbReference type="FunCoup" id="Q6FKM3">
    <property type="interactions" value="835"/>
</dbReference>
<dbReference type="STRING" id="284593.Q6FKM3"/>
<dbReference type="CAZy" id="GT57">
    <property type="family name" value="Glycosyltransferase Family 57"/>
</dbReference>
<dbReference type="EnsemblFungi" id="CAGL0L10450g-T">
    <property type="protein sequence ID" value="CAGL0L10450g-T-p1"/>
    <property type="gene ID" value="CAGL0L10450g"/>
</dbReference>
<dbReference type="KEGG" id="cgr:2891072"/>
<dbReference type="CGD" id="CAL0135006">
    <property type="gene designation" value="ALG8"/>
</dbReference>
<dbReference type="VEuPathDB" id="FungiDB:CAGL0L10450g"/>
<dbReference type="eggNOG" id="KOG2576">
    <property type="taxonomic scope" value="Eukaryota"/>
</dbReference>
<dbReference type="HOGENOM" id="CLU_022045_1_1_1"/>
<dbReference type="InParanoid" id="Q6FKM3"/>
<dbReference type="OMA" id="YHSTDFD"/>
<dbReference type="UniPathway" id="UPA00378"/>
<dbReference type="Proteomes" id="UP000002428">
    <property type="component" value="Chromosome L"/>
</dbReference>
<dbReference type="GO" id="GO:0005789">
    <property type="term" value="C:endoplasmic reticulum membrane"/>
    <property type="evidence" value="ECO:0000250"/>
    <property type="project" value="UniProtKB"/>
</dbReference>
<dbReference type="GO" id="GO:0042283">
    <property type="term" value="F:dolichyl pyrophosphate Glc1Man9GlcNAc2 alpha-1,3-glucosyltransferase activity"/>
    <property type="evidence" value="ECO:0000250"/>
    <property type="project" value="UniProtKB"/>
</dbReference>
<dbReference type="GO" id="GO:0006488">
    <property type="term" value="P:dolichol-linked oligosaccharide biosynthetic process"/>
    <property type="evidence" value="ECO:0000250"/>
    <property type="project" value="UniProtKB"/>
</dbReference>
<dbReference type="GO" id="GO:0006487">
    <property type="term" value="P:protein N-linked glycosylation"/>
    <property type="evidence" value="ECO:0000250"/>
    <property type="project" value="UniProtKB"/>
</dbReference>
<dbReference type="InterPro" id="IPR004856">
    <property type="entry name" value="Glyco_trans_ALG6/ALG8"/>
</dbReference>
<dbReference type="PANTHER" id="PTHR12413">
    <property type="entry name" value="DOLICHYL GLYCOSYLTRANSFERASE"/>
    <property type="match status" value="1"/>
</dbReference>
<dbReference type="PANTHER" id="PTHR12413:SF2">
    <property type="entry name" value="DOLICHYL PYROPHOSPHATE GLC1MAN9GLCNAC2 ALPHA-1,3-GLUCOSYLTRANSFERASE-RELATED"/>
    <property type="match status" value="1"/>
</dbReference>
<dbReference type="Pfam" id="PF03155">
    <property type="entry name" value="Alg6_Alg8"/>
    <property type="match status" value="1"/>
</dbReference>
<feature type="chain" id="PRO_0000278329" description="Dolichyl pyrophosphate Glc1Man9GlcNAc2 alpha-1,3-glucosyltransferase">
    <location>
        <begin position="1"/>
        <end position="550"/>
    </location>
</feature>
<feature type="topological domain" description="Lumenal" evidence="2">
    <location>
        <begin position="1"/>
        <end position="11"/>
    </location>
</feature>
<feature type="transmembrane region" description="Helical" evidence="2">
    <location>
        <begin position="12"/>
        <end position="32"/>
    </location>
</feature>
<feature type="topological domain" description="Cytoplasmic" evidence="2">
    <location>
        <begin position="33"/>
        <end position="109"/>
    </location>
</feature>
<feature type="transmembrane region" description="Helical" evidence="2">
    <location>
        <begin position="110"/>
        <end position="130"/>
    </location>
</feature>
<feature type="topological domain" description="Lumenal" evidence="2">
    <location>
        <begin position="131"/>
        <end position="150"/>
    </location>
</feature>
<feature type="transmembrane region" description="Helical" evidence="2">
    <location>
        <begin position="151"/>
        <end position="171"/>
    </location>
</feature>
<feature type="topological domain" description="Cytoplasmic" evidence="2">
    <location>
        <begin position="172"/>
        <end position="189"/>
    </location>
</feature>
<feature type="transmembrane region" description="Helical" evidence="2">
    <location>
        <begin position="190"/>
        <end position="210"/>
    </location>
</feature>
<feature type="topological domain" description="Lumenal" evidence="2">
    <location>
        <begin position="211"/>
        <end position="236"/>
    </location>
</feature>
<feature type="transmembrane region" description="Helical" evidence="2">
    <location>
        <begin position="237"/>
        <end position="257"/>
    </location>
</feature>
<feature type="topological domain" description="Cytoplasmic" evidence="2">
    <location>
        <begin position="258"/>
        <end position="277"/>
    </location>
</feature>
<feature type="transmembrane region" description="Helical" evidence="2">
    <location>
        <begin position="278"/>
        <end position="298"/>
    </location>
</feature>
<feature type="topological domain" description="Lumenal" evidence="2">
    <location>
        <begin position="299"/>
        <end position="352"/>
    </location>
</feature>
<feature type="transmembrane region" description="Helical" evidence="2">
    <location>
        <begin position="353"/>
        <end position="373"/>
    </location>
</feature>
<feature type="topological domain" description="Cytoplasmic" evidence="2">
    <location>
        <begin position="374"/>
        <end position="392"/>
    </location>
</feature>
<feature type="transmembrane region" description="Helical" evidence="2">
    <location>
        <begin position="393"/>
        <end position="413"/>
    </location>
</feature>
<feature type="topological domain" description="Lumenal" evidence="2">
    <location>
        <begin position="414"/>
        <end position="417"/>
    </location>
</feature>
<feature type="transmembrane region" description="Helical" evidence="2">
    <location>
        <begin position="418"/>
        <end position="438"/>
    </location>
</feature>
<feature type="topological domain" description="Cytoplasmic" evidence="2">
    <location>
        <begin position="439"/>
        <end position="440"/>
    </location>
</feature>
<feature type="transmembrane region" description="Helical" evidence="2">
    <location>
        <begin position="441"/>
        <end position="461"/>
    </location>
</feature>
<feature type="topological domain" description="Lumenal" evidence="2">
    <location>
        <begin position="462"/>
        <end position="475"/>
    </location>
</feature>
<feature type="transmembrane region" description="Helical" evidence="2">
    <location>
        <begin position="476"/>
        <end position="496"/>
    </location>
</feature>
<feature type="topological domain" description="Cytoplasmic" evidence="2">
    <location>
        <begin position="497"/>
        <end position="513"/>
    </location>
</feature>
<feature type="transmembrane region" description="Helical" evidence="2">
    <location>
        <begin position="514"/>
        <end position="534"/>
    </location>
</feature>
<feature type="topological domain" description="Lumenal" evidence="2">
    <location>
        <begin position="535"/>
        <end position="550"/>
    </location>
</feature>
<proteinExistence type="inferred from homology"/>